<name>RL15_MARN8</name>
<organism>
    <name type="scientific">Marinobacter nauticus (strain ATCC 700491 / DSM 11845 / VT8)</name>
    <name type="common">Marinobacter aquaeolei</name>
    <dbReference type="NCBI Taxonomy" id="351348"/>
    <lineage>
        <taxon>Bacteria</taxon>
        <taxon>Pseudomonadati</taxon>
        <taxon>Pseudomonadota</taxon>
        <taxon>Gammaproteobacteria</taxon>
        <taxon>Pseudomonadales</taxon>
        <taxon>Marinobacteraceae</taxon>
        <taxon>Marinobacter</taxon>
    </lineage>
</organism>
<reference key="1">
    <citation type="journal article" date="2011" name="Appl. Environ. Microbiol.">
        <title>Genomic potential of Marinobacter aquaeolei, a biogeochemical 'opportunitroph'.</title>
        <authorList>
            <person name="Singer E."/>
            <person name="Webb E.A."/>
            <person name="Nelson W.C."/>
            <person name="Heidelberg J.F."/>
            <person name="Ivanova N."/>
            <person name="Pati A."/>
            <person name="Edwards K.J."/>
        </authorList>
    </citation>
    <scope>NUCLEOTIDE SEQUENCE [LARGE SCALE GENOMIC DNA]</scope>
    <source>
        <strain>ATCC 700491 / DSM 11845 / VT8</strain>
    </source>
</reference>
<gene>
    <name evidence="1" type="primary">rplO</name>
    <name type="ordered locus">Maqu_0738</name>
</gene>
<sequence length="144" mass="15254">MRLNELAPEPGSRPSAKRVGRGIGSGLGKTGGRGHKGLKSRSGGSVAPGFEGGQQPLARRLPKFGFTSRQQRYVAEIRLNELAKVEGDVVDLAALKKADIIREEIREAKVILSGELDRAVTVKGLRVTKGAREAITAAGGKVED</sequence>
<feature type="chain" id="PRO_1000054488" description="Large ribosomal subunit protein uL15">
    <location>
        <begin position="1"/>
        <end position="144"/>
    </location>
</feature>
<feature type="region of interest" description="Disordered" evidence="2">
    <location>
        <begin position="1"/>
        <end position="58"/>
    </location>
</feature>
<feature type="compositionally biased region" description="Gly residues" evidence="2">
    <location>
        <begin position="21"/>
        <end position="31"/>
    </location>
</feature>
<accession>A1TYL6</accession>
<protein>
    <recommendedName>
        <fullName evidence="1">Large ribosomal subunit protein uL15</fullName>
    </recommendedName>
    <alternativeName>
        <fullName evidence="3">50S ribosomal protein L15</fullName>
    </alternativeName>
</protein>
<keyword id="KW-0687">Ribonucleoprotein</keyword>
<keyword id="KW-0689">Ribosomal protein</keyword>
<keyword id="KW-0694">RNA-binding</keyword>
<keyword id="KW-0699">rRNA-binding</keyword>
<proteinExistence type="inferred from homology"/>
<evidence type="ECO:0000255" key="1">
    <source>
        <dbReference type="HAMAP-Rule" id="MF_01341"/>
    </source>
</evidence>
<evidence type="ECO:0000256" key="2">
    <source>
        <dbReference type="SAM" id="MobiDB-lite"/>
    </source>
</evidence>
<evidence type="ECO:0000305" key="3"/>
<comment type="function">
    <text evidence="1">Binds to the 23S rRNA.</text>
</comment>
<comment type="subunit">
    <text evidence="1">Part of the 50S ribosomal subunit.</text>
</comment>
<comment type="similarity">
    <text evidence="1">Belongs to the universal ribosomal protein uL15 family.</text>
</comment>
<dbReference type="EMBL" id="CP000514">
    <property type="protein sequence ID" value="ABM17835.1"/>
    <property type="molecule type" value="Genomic_DNA"/>
</dbReference>
<dbReference type="RefSeq" id="WP_011784260.1">
    <property type="nucleotide sequence ID" value="NC_008740.1"/>
</dbReference>
<dbReference type="SMR" id="A1TYL6"/>
<dbReference type="STRING" id="351348.Maqu_0738"/>
<dbReference type="GeneID" id="31820113"/>
<dbReference type="KEGG" id="maq:Maqu_0738"/>
<dbReference type="eggNOG" id="COG0200">
    <property type="taxonomic scope" value="Bacteria"/>
</dbReference>
<dbReference type="HOGENOM" id="CLU_055188_4_2_6"/>
<dbReference type="OrthoDB" id="9810293at2"/>
<dbReference type="Proteomes" id="UP000000998">
    <property type="component" value="Chromosome"/>
</dbReference>
<dbReference type="GO" id="GO:0022625">
    <property type="term" value="C:cytosolic large ribosomal subunit"/>
    <property type="evidence" value="ECO:0007669"/>
    <property type="project" value="TreeGrafter"/>
</dbReference>
<dbReference type="GO" id="GO:0019843">
    <property type="term" value="F:rRNA binding"/>
    <property type="evidence" value="ECO:0007669"/>
    <property type="project" value="UniProtKB-UniRule"/>
</dbReference>
<dbReference type="GO" id="GO:0003735">
    <property type="term" value="F:structural constituent of ribosome"/>
    <property type="evidence" value="ECO:0007669"/>
    <property type="project" value="InterPro"/>
</dbReference>
<dbReference type="GO" id="GO:0006412">
    <property type="term" value="P:translation"/>
    <property type="evidence" value="ECO:0007669"/>
    <property type="project" value="UniProtKB-UniRule"/>
</dbReference>
<dbReference type="Gene3D" id="3.100.10.10">
    <property type="match status" value="1"/>
</dbReference>
<dbReference type="HAMAP" id="MF_01341">
    <property type="entry name" value="Ribosomal_uL15"/>
    <property type="match status" value="1"/>
</dbReference>
<dbReference type="InterPro" id="IPR030878">
    <property type="entry name" value="Ribosomal_uL15"/>
</dbReference>
<dbReference type="InterPro" id="IPR021131">
    <property type="entry name" value="Ribosomal_uL15/eL18"/>
</dbReference>
<dbReference type="InterPro" id="IPR036227">
    <property type="entry name" value="Ribosomal_uL15/eL18_sf"/>
</dbReference>
<dbReference type="InterPro" id="IPR005749">
    <property type="entry name" value="Ribosomal_uL15_bac-type"/>
</dbReference>
<dbReference type="InterPro" id="IPR001196">
    <property type="entry name" value="Ribosomal_uL15_CS"/>
</dbReference>
<dbReference type="NCBIfam" id="TIGR01071">
    <property type="entry name" value="rplO_bact"/>
    <property type="match status" value="1"/>
</dbReference>
<dbReference type="PANTHER" id="PTHR12934">
    <property type="entry name" value="50S RIBOSOMAL PROTEIN L15"/>
    <property type="match status" value="1"/>
</dbReference>
<dbReference type="PANTHER" id="PTHR12934:SF11">
    <property type="entry name" value="LARGE RIBOSOMAL SUBUNIT PROTEIN UL15M"/>
    <property type="match status" value="1"/>
</dbReference>
<dbReference type="Pfam" id="PF00828">
    <property type="entry name" value="Ribosomal_L27A"/>
    <property type="match status" value="1"/>
</dbReference>
<dbReference type="SUPFAM" id="SSF52080">
    <property type="entry name" value="Ribosomal proteins L15p and L18e"/>
    <property type="match status" value="1"/>
</dbReference>
<dbReference type="PROSITE" id="PS00475">
    <property type="entry name" value="RIBOSOMAL_L15"/>
    <property type="match status" value="1"/>
</dbReference>